<dbReference type="EMBL" id="CP001205">
    <property type="protein sequence ID" value="ACK74783.1"/>
    <property type="molecule type" value="Genomic_DNA"/>
</dbReference>
<dbReference type="RefSeq" id="WP_002557069.1">
    <property type="nucleotide sequence ID" value="NC_011728.1"/>
</dbReference>
<dbReference type="SMR" id="B7J243"/>
<dbReference type="GeneID" id="56567913"/>
<dbReference type="KEGG" id="bbz:BbuZS7_0489"/>
<dbReference type="HOGENOM" id="CLU_044142_4_1_12"/>
<dbReference type="Proteomes" id="UP000006901">
    <property type="component" value="Chromosome"/>
</dbReference>
<dbReference type="GO" id="GO:0022625">
    <property type="term" value="C:cytosolic large ribosomal subunit"/>
    <property type="evidence" value="ECO:0007669"/>
    <property type="project" value="TreeGrafter"/>
</dbReference>
<dbReference type="GO" id="GO:0019843">
    <property type="term" value="F:rRNA binding"/>
    <property type="evidence" value="ECO:0007669"/>
    <property type="project" value="UniProtKB-UniRule"/>
</dbReference>
<dbReference type="GO" id="GO:0003735">
    <property type="term" value="F:structural constituent of ribosome"/>
    <property type="evidence" value="ECO:0007669"/>
    <property type="project" value="InterPro"/>
</dbReference>
<dbReference type="GO" id="GO:0006412">
    <property type="term" value="P:translation"/>
    <property type="evidence" value="ECO:0007669"/>
    <property type="project" value="UniProtKB-UniRule"/>
</dbReference>
<dbReference type="FunFam" id="2.40.30.10:FF:000004">
    <property type="entry name" value="50S ribosomal protein L3"/>
    <property type="match status" value="1"/>
</dbReference>
<dbReference type="Gene3D" id="2.40.30.10">
    <property type="entry name" value="Translation factors"/>
    <property type="match status" value="2"/>
</dbReference>
<dbReference type="HAMAP" id="MF_01325_B">
    <property type="entry name" value="Ribosomal_uL3_B"/>
    <property type="match status" value="1"/>
</dbReference>
<dbReference type="InterPro" id="IPR000597">
    <property type="entry name" value="Ribosomal_uL3"/>
</dbReference>
<dbReference type="InterPro" id="IPR019927">
    <property type="entry name" value="Ribosomal_uL3_bac/org-type"/>
</dbReference>
<dbReference type="InterPro" id="IPR019926">
    <property type="entry name" value="Ribosomal_uL3_CS"/>
</dbReference>
<dbReference type="InterPro" id="IPR009000">
    <property type="entry name" value="Transl_B-barrel_sf"/>
</dbReference>
<dbReference type="NCBIfam" id="TIGR03625">
    <property type="entry name" value="L3_bact"/>
    <property type="match status" value="1"/>
</dbReference>
<dbReference type="PANTHER" id="PTHR11229">
    <property type="entry name" value="50S RIBOSOMAL PROTEIN L3"/>
    <property type="match status" value="1"/>
</dbReference>
<dbReference type="PANTHER" id="PTHR11229:SF16">
    <property type="entry name" value="LARGE RIBOSOMAL SUBUNIT PROTEIN UL3C"/>
    <property type="match status" value="1"/>
</dbReference>
<dbReference type="Pfam" id="PF00297">
    <property type="entry name" value="Ribosomal_L3"/>
    <property type="match status" value="1"/>
</dbReference>
<dbReference type="SUPFAM" id="SSF50447">
    <property type="entry name" value="Translation proteins"/>
    <property type="match status" value="1"/>
</dbReference>
<dbReference type="PROSITE" id="PS00474">
    <property type="entry name" value="RIBOSOMAL_L3"/>
    <property type="match status" value="1"/>
</dbReference>
<organism>
    <name type="scientific">Borreliella burgdorferi (strain ZS7)</name>
    <name type="common">Borrelia burgdorferi</name>
    <dbReference type="NCBI Taxonomy" id="445985"/>
    <lineage>
        <taxon>Bacteria</taxon>
        <taxon>Pseudomonadati</taxon>
        <taxon>Spirochaetota</taxon>
        <taxon>Spirochaetia</taxon>
        <taxon>Spirochaetales</taxon>
        <taxon>Borreliaceae</taxon>
        <taxon>Borreliella</taxon>
    </lineage>
</organism>
<feature type="chain" id="PRO_1000141829" description="Large ribosomal subunit protein uL3">
    <location>
        <begin position="1"/>
        <end position="206"/>
    </location>
</feature>
<feature type="region of interest" description="Disordered" evidence="2">
    <location>
        <begin position="127"/>
        <end position="151"/>
    </location>
</feature>
<reference key="1">
    <citation type="journal article" date="2011" name="J. Bacteriol.">
        <title>Whole-genome sequences of thirteen isolates of Borrelia burgdorferi.</title>
        <authorList>
            <person name="Schutzer S.E."/>
            <person name="Fraser-Liggett C.M."/>
            <person name="Casjens S.R."/>
            <person name="Qiu W.G."/>
            <person name="Dunn J.J."/>
            <person name="Mongodin E.F."/>
            <person name="Luft B.J."/>
        </authorList>
    </citation>
    <scope>NUCLEOTIDE SEQUENCE [LARGE SCALE GENOMIC DNA]</scope>
    <source>
        <strain>ZS7</strain>
    </source>
</reference>
<protein>
    <recommendedName>
        <fullName evidence="1">Large ribosomal subunit protein uL3</fullName>
    </recommendedName>
    <alternativeName>
        <fullName evidence="3">50S ribosomal protein L3</fullName>
    </alternativeName>
</protein>
<gene>
    <name evidence="1" type="primary">rplC</name>
    <name type="ordered locus">BbuZS7_0489</name>
</gene>
<accession>B7J243</accession>
<proteinExistence type="inferred from homology"/>
<sequence length="206" mass="22212">MLGLIGKKVGMTQIFQKNGIVVPVTVIEFQPNYIIGKKTVDRDGYSALIAGSVDLKSSKVSKPIKGQYKSLKDIEPKRYVIELKGLDGYDAGDEIKVDVFKSVKYVDVTGTTKGKGFQGAMKRHNFSGGPSSHGSKFHRHLGGTGQATTPARTFKGTKMAGRMGGNQQTIQNLEVVLIDEEKRALLVKGAVPGAKGSFVVVKKSKK</sequence>
<name>RL3_BORBZ</name>
<keyword id="KW-0687">Ribonucleoprotein</keyword>
<keyword id="KW-0689">Ribosomal protein</keyword>
<keyword id="KW-0694">RNA-binding</keyword>
<keyword id="KW-0699">rRNA-binding</keyword>
<comment type="function">
    <text evidence="1">One of the primary rRNA binding proteins, it binds directly near the 3'-end of the 23S rRNA, where it nucleates assembly of the 50S subunit.</text>
</comment>
<comment type="subunit">
    <text evidence="1">Part of the 50S ribosomal subunit. Forms a cluster with proteins L14 and L19.</text>
</comment>
<comment type="similarity">
    <text evidence="1">Belongs to the universal ribosomal protein uL3 family.</text>
</comment>
<evidence type="ECO:0000255" key="1">
    <source>
        <dbReference type="HAMAP-Rule" id="MF_01325"/>
    </source>
</evidence>
<evidence type="ECO:0000256" key="2">
    <source>
        <dbReference type="SAM" id="MobiDB-lite"/>
    </source>
</evidence>
<evidence type="ECO:0000305" key="3"/>